<evidence type="ECO:0000255" key="1">
    <source>
        <dbReference type="HAMAP-Rule" id="MF_00121"/>
    </source>
</evidence>
<protein>
    <recommendedName>
        <fullName evidence="1">Aspartyl/glutamyl-tRNA(Asn/Gln) amidotransferase subunit B</fullName>
        <shortName evidence="1">Asp/Glu-ADT subunit B</shortName>
        <ecNumber evidence="1">6.3.5.-</ecNumber>
    </recommendedName>
</protein>
<organism>
    <name type="scientific">Listeria monocytogenes serotype 4b (strain F2365)</name>
    <dbReference type="NCBI Taxonomy" id="265669"/>
    <lineage>
        <taxon>Bacteria</taxon>
        <taxon>Bacillati</taxon>
        <taxon>Bacillota</taxon>
        <taxon>Bacilli</taxon>
        <taxon>Bacillales</taxon>
        <taxon>Listeriaceae</taxon>
        <taxon>Listeria</taxon>
    </lineage>
</organism>
<gene>
    <name evidence="1" type="primary">gatB</name>
    <name type="ordered locus">LMOf2365_1779</name>
</gene>
<dbReference type="EC" id="6.3.5.-" evidence="1"/>
<dbReference type="EMBL" id="AE017262">
    <property type="protein sequence ID" value="AAT04550.1"/>
    <property type="molecule type" value="Genomic_DNA"/>
</dbReference>
<dbReference type="RefSeq" id="WP_003731563.1">
    <property type="nucleotide sequence ID" value="NC_002973.6"/>
</dbReference>
<dbReference type="SMR" id="Q71YR4"/>
<dbReference type="KEGG" id="lmf:LMOf2365_1779"/>
<dbReference type="HOGENOM" id="CLU_019240_0_0_9"/>
<dbReference type="GO" id="GO:0050566">
    <property type="term" value="F:asparaginyl-tRNA synthase (glutamine-hydrolyzing) activity"/>
    <property type="evidence" value="ECO:0007669"/>
    <property type="project" value="RHEA"/>
</dbReference>
<dbReference type="GO" id="GO:0005524">
    <property type="term" value="F:ATP binding"/>
    <property type="evidence" value="ECO:0007669"/>
    <property type="project" value="UniProtKB-KW"/>
</dbReference>
<dbReference type="GO" id="GO:0050567">
    <property type="term" value="F:glutaminyl-tRNA synthase (glutamine-hydrolyzing) activity"/>
    <property type="evidence" value="ECO:0007669"/>
    <property type="project" value="UniProtKB-UniRule"/>
</dbReference>
<dbReference type="GO" id="GO:0070681">
    <property type="term" value="P:glutaminyl-tRNAGln biosynthesis via transamidation"/>
    <property type="evidence" value="ECO:0007669"/>
    <property type="project" value="TreeGrafter"/>
</dbReference>
<dbReference type="GO" id="GO:0006412">
    <property type="term" value="P:translation"/>
    <property type="evidence" value="ECO:0007669"/>
    <property type="project" value="UniProtKB-UniRule"/>
</dbReference>
<dbReference type="FunFam" id="1.10.10.410:FF:000001">
    <property type="entry name" value="Aspartyl/glutamyl-tRNA(Asn/Gln) amidotransferase subunit B"/>
    <property type="match status" value="1"/>
</dbReference>
<dbReference type="FunFam" id="1.10.150.380:FF:000001">
    <property type="entry name" value="Aspartyl/glutamyl-tRNA(Asn/Gln) amidotransferase subunit B"/>
    <property type="match status" value="1"/>
</dbReference>
<dbReference type="Gene3D" id="1.10.10.410">
    <property type="match status" value="1"/>
</dbReference>
<dbReference type="Gene3D" id="1.10.150.380">
    <property type="entry name" value="GatB domain, N-terminal subdomain"/>
    <property type="match status" value="1"/>
</dbReference>
<dbReference type="HAMAP" id="MF_00121">
    <property type="entry name" value="GatB"/>
    <property type="match status" value="1"/>
</dbReference>
<dbReference type="InterPro" id="IPR017959">
    <property type="entry name" value="Asn/Gln-tRNA_amidoTrfase_suB/E"/>
</dbReference>
<dbReference type="InterPro" id="IPR006075">
    <property type="entry name" value="Asn/Gln-tRNA_Trfase_suB/E_cat"/>
</dbReference>
<dbReference type="InterPro" id="IPR018027">
    <property type="entry name" value="Asn/Gln_amidotransferase"/>
</dbReference>
<dbReference type="InterPro" id="IPR003789">
    <property type="entry name" value="Asn/Gln_tRNA_amidoTrase-B-like"/>
</dbReference>
<dbReference type="InterPro" id="IPR004413">
    <property type="entry name" value="GatB"/>
</dbReference>
<dbReference type="InterPro" id="IPR042114">
    <property type="entry name" value="GatB_C_1"/>
</dbReference>
<dbReference type="InterPro" id="IPR023168">
    <property type="entry name" value="GatB_Yqey_C_2"/>
</dbReference>
<dbReference type="InterPro" id="IPR017958">
    <property type="entry name" value="Gln-tRNA_amidoTrfase_suB_CS"/>
</dbReference>
<dbReference type="InterPro" id="IPR014746">
    <property type="entry name" value="Gln_synth/guanido_kin_cat_dom"/>
</dbReference>
<dbReference type="NCBIfam" id="TIGR00133">
    <property type="entry name" value="gatB"/>
    <property type="match status" value="1"/>
</dbReference>
<dbReference type="NCBIfam" id="NF004011">
    <property type="entry name" value="PRK05477.1-1"/>
    <property type="match status" value="1"/>
</dbReference>
<dbReference type="NCBIfam" id="NF004012">
    <property type="entry name" value="PRK05477.1-2"/>
    <property type="match status" value="1"/>
</dbReference>
<dbReference type="NCBIfam" id="NF004014">
    <property type="entry name" value="PRK05477.1-4"/>
    <property type="match status" value="1"/>
</dbReference>
<dbReference type="PANTHER" id="PTHR11659">
    <property type="entry name" value="GLUTAMYL-TRNA GLN AMIDOTRANSFERASE SUBUNIT B MITOCHONDRIAL AND PROKARYOTIC PET112-RELATED"/>
    <property type="match status" value="1"/>
</dbReference>
<dbReference type="PANTHER" id="PTHR11659:SF0">
    <property type="entry name" value="GLUTAMYL-TRNA(GLN) AMIDOTRANSFERASE SUBUNIT B, MITOCHONDRIAL"/>
    <property type="match status" value="1"/>
</dbReference>
<dbReference type="Pfam" id="PF02934">
    <property type="entry name" value="GatB_N"/>
    <property type="match status" value="1"/>
</dbReference>
<dbReference type="Pfam" id="PF02637">
    <property type="entry name" value="GatB_Yqey"/>
    <property type="match status" value="1"/>
</dbReference>
<dbReference type="SMART" id="SM00845">
    <property type="entry name" value="GatB_Yqey"/>
    <property type="match status" value="1"/>
</dbReference>
<dbReference type="SUPFAM" id="SSF89095">
    <property type="entry name" value="GatB/YqeY motif"/>
    <property type="match status" value="1"/>
</dbReference>
<dbReference type="SUPFAM" id="SSF55931">
    <property type="entry name" value="Glutamine synthetase/guanido kinase"/>
    <property type="match status" value="1"/>
</dbReference>
<dbReference type="PROSITE" id="PS01234">
    <property type="entry name" value="GATB"/>
    <property type="match status" value="1"/>
</dbReference>
<name>GATB_LISMF</name>
<reference key="1">
    <citation type="journal article" date="2004" name="Nucleic Acids Res.">
        <title>Whole genome comparisons of serotype 4b and 1/2a strains of the food-borne pathogen Listeria monocytogenes reveal new insights into the core genome components of this species.</title>
        <authorList>
            <person name="Nelson K.E."/>
            <person name="Fouts D.E."/>
            <person name="Mongodin E.F."/>
            <person name="Ravel J."/>
            <person name="DeBoy R.T."/>
            <person name="Kolonay J.F."/>
            <person name="Rasko D.A."/>
            <person name="Angiuoli S.V."/>
            <person name="Gill S.R."/>
            <person name="Paulsen I.T."/>
            <person name="Peterson J.D."/>
            <person name="White O."/>
            <person name="Nelson W.C."/>
            <person name="Nierman W.C."/>
            <person name="Beanan M.J."/>
            <person name="Brinkac L.M."/>
            <person name="Daugherty S.C."/>
            <person name="Dodson R.J."/>
            <person name="Durkin A.S."/>
            <person name="Madupu R."/>
            <person name="Haft D.H."/>
            <person name="Selengut J."/>
            <person name="Van Aken S.E."/>
            <person name="Khouri H.M."/>
            <person name="Fedorova N."/>
            <person name="Forberger H.A."/>
            <person name="Tran B."/>
            <person name="Kathariou S."/>
            <person name="Wonderling L.D."/>
            <person name="Uhlich G.A."/>
            <person name="Bayles D.O."/>
            <person name="Luchansky J.B."/>
            <person name="Fraser C.M."/>
        </authorList>
    </citation>
    <scope>NUCLEOTIDE SEQUENCE [LARGE SCALE GENOMIC DNA]</scope>
    <source>
        <strain>F2365</strain>
    </source>
</reference>
<accession>Q71YR4</accession>
<keyword id="KW-0067">ATP-binding</keyword>
<keyword id="KW-0436">Ligase</keyword>
<keyword id="KW-0547">Nucleotide-binding</keyword>
<keyword id="KW-0648">Protein biosynthesis</keyword>
<feature type="chain" id="PRO_0000148803" description="Aspartyl/glutamyl-tRNA(Asn/Gln) amidotransferase subunit B">
    <location>
        <begin position="1"/>
        <end position="476"/>
    </location>
</feature>
<proteinExistence type="inferred from homology"/>
<comment type="function">
    <text evidence="1">Allows the formation of correctly charged Asn-tRNA(Asn) or Gln-tRNA(Gln) through the transamidation of misacylated Asp-tRNA(Asn) or Glu-tRNA(Gln) in organisms which lack either or both of asparaginyl-tRNA or glutaminyl-tRNA synthetases. The reaction takes place in the presence of glutamine and ATP through an activated phospho-Asp-tRNA(Asn) or phospho-Glu-tRNA(Gln).</text>
</comment>
<comment type="catalytic activity">
    <reaction evidence="1">
        <text>L-glutamyl-tRNA(Gln) + L-glutamine + ATP + H2O = L-glutaminyl-tRNA(Gln) + L-glutamate + ADP + phosphate + H(+)</text>
        <dbReference type="Rhea" id="RHEA:17521"/>
        <dbReference type="Rhea" id="RHEA-COMP:9681"/>
        <dbReference type="Rhea" id="RHEA-COMP:9684"/>
        <dbReference type="ChEBI" id="CHEBI:15377"/>
        <dbReference type="ChEBI" id="CHEBI:15378"/>
        <dbReference type="ChEBI" id="CHEBI:29985"/>
        <dbReference type="ChEBI" id="CHEBI:30616"/>
        <dbReference type="ChEBI" id="CHEBI:43474"/>
        <dbReference type="ChEBI" id="CHEBI:58359"/>
        <dbReference type="ChEBI" id="CHEBI:78520"/>
        <dbReference type="ChEBI" id="CHEBI:78521"/>
        <dbReference type="ChEBI" id="CHEBI:456216"/>
    </reaction>
</comment>
<comment type="catalytic activity">
    <reaction evidence="1">
        <text>L-aspartyl-tRNA(Asn) + L-glutamine + ATP + H2O = L-asparaginyl-tRNA(Asn) + L-glutamate + ADP + phosphate + 2 H(+)</text>
        <dbReference type="Rhea" id="RHEA:14513"/>
        <dbReference type="Rhea" id="RHEA-COMP:9674"/>
        <dbReference type="Rhea" id="RHEA-COMP:9677"/>
        <dbReference type="ChEBI" id="CHEBI:15377"/>
        <dbReference type="ChEBI" id="CHEBI:15378"/>
        <dbReference type="ChEBI" id="CHEBI:29985"/>
        <dbReference type="ChEBI" id="CHEBI:30616"/>
        <dbReference type="ChEBI" id="CHEBI:43474"/>
        <dbReference type="ChEBI" id="CHEBI:58359"/>
        <dbReference type="ChEBI" id="CHEBI:78515"/>
        <dbReference type="ChEBI" id="CHEBI:78516"/>
        <dbReference type="ChEBI" id="CHEBI:456216"/>
    </reaction>
</comment>
<comment type="subunit">
    <text evidence="1">Heterotrimer of A, B and C subunits.</text>
</comment>
<comment type="similarity">
    <text evidence="1">Belongs to the GatB/GatE family. GatB subfamily.</text>
</comment>
<sequence length="476" mass="53208">MNFETVIGLEVHVELKTNSKIFSSAPAHFGAEPNTNTTVVDLGMPGVLPVLNKRAVEFGMKAAMAINCEIAKHTKFDRKNYFYPDNPKAYQISQFDKPIGEHGWIEIEVGGKKKKIGITRLHLEEDAGKNTHTSHGYSLVDINRQGTPLIEIVSEPDIRSAEEAYAYLEKLKSIIQYTGVSDVKMEEGSMRCDANISIRPIGQEEFGVKTELKNLNSFNNVRKGIEYEEKRQAEVLKSGGIIEQETRRFEEATGKTSLMRIKEGSDDYRYFPEPDLVDLFIDDAWKERIRAEIPELPDKRQIRYINDLGLPAYDAMVLTLTKEMSDFFEATLAAGADAKQASNWLMGEVSAYLNAEQKELHETGLTPENLAGMIKLIEAGTISSKIAKKVFRELAQNGGDAEQVVKDKGLVQISDEGALRTIISEILDNNEQSIVDFKNGKDRAVGFLVGQVMKATKGQANPPMVNKLLLEEMNKR</sequence>